<proteinExistence type="inferred from homology"/>
<gene>
    <name evidence="1" type="primary">opgG</name>
    <name type="ordered locus">PSPA7_5817</name>
</gene>
<accession>A6VDK1</accession>
<evidence type="ECO:0000255" key="1">
    <source>
        <dbReference type="HAMAP-Rule" id="MF_01069"/>
    </source>
</evidence>
<feature type="signal peptide" evidence="1">
    <location>
        <begin position="1"/>
        <end position="35"/>
    </location>
</feature>
<feature type="chain" id="PRO_1000064562" description="Glucans biosynthesis protein G">
    <location>
        <begin position="36"/>
        <end position="525"/>
    </location>
</feature>
<sequence>MIFRSVSNTDFRARVRTLLLAGSTALAFVAAPVWAFSIDDVASKAKDLAGDKYSAPTSNLPSEFSEMKFADYQQIRFINERAYWGKLKTPFKLSFYHQGMHFDTPVKINEVTATTVKPIKYDRTKFDFGSLKFDENATKDLGYAGFRVLYPINQADKQDEIATFLGASYFRVVGKGQVYGLSARGLAIDTALPSGEEFPRFREFWIERPKAQDKQLVIYALLDSPRATGAYRFVLRPGKDAVMDVQARVFLREKVSKLGLAPLTSMYLFGSNQPSEQHNFRPELHDSSGLQIHAGNGEWLWRPLNNPKHLSVSTFSVENPKGFGLLQRGREFSRYEDLDDRYDLRPSAWIEPKGDWGKGTVELVEIPTPDETNDNIVAFWNPETQPEVGKPLDFAYRLHWTMDEDELHDPKSSWVKQTMRSVGDVKQKNLIRQQDGSTALVVDFEGPALKDLAPDAPVTTQVSTDSNAEVVENSLRYNPVLKGWRLTLRIKVKDPKKPVEMRAALVDEAQKPLSETWSYQLPADE</sequence>
<keyword id="KW-0574">Periplasm</keyword>
<keyword id="KW-0732">Signal</keyword>
<comment type="function">
    <text evidence="1">Involved in the biosynthesis of osmoregulated periplasmic glucans (OPGs).</text>
</comment>
<comment type="pathway">
    <text evidence="1">Glycan metabolism; osmoregulated periplasmic glucan (OPG) biosynthesis.</text>
</comment>
<comment type="subcellular location">
    <subcellularLocation>
        <location evidence="1">Periplasm</location>
    </subcellularLocation>
</comment>
<comment type="similarity">
    <text evidence="1">Belongs to the OpgD/OpgG family.</text>
</comment>
<reference key="1">
    <citation type="submission" date="2007-06" db="EMBL/GenBank/DDBJ databases">
        <authorList>
            <person name="Dodson R.J."/>
            <person name="Harkins D."/>
            <person name="Paulsen I.T."/>
        </authorList>
    </citation>
    <scope>NUCLEOTIDE SEQUENCE [LARGE SCALE GENOMIC DNA]</scope>
    <source>
        <strain>DSM 24068 / PA7</strain>
    </source>
</reference>
<dbReference type="EMBL" id="CP000744">
    <property type="protein sequence ID" value="ABR83270.1"/>
    <property type="molecule type" value="Genomic_DNA"/>
</dbReference>
<dbReference type="RefSeq" id="WP_012077744.1">
    <property type="nucleotide sequence ID" value="NC_009656.1"/>
</dbReference>
<dbReference type="SMR" id="A6VDK1"/>
<dbReference type="GeneID" id="77223615"/>
<dbReference type="KEGG" id="pap:PSPA7_5817"/>
<dbReference type="HOGENOM" id="CLU_023403_2_0_6"/>
<dbReference type="UniPathway" id="UPA00637"/>
<dbReference type="Proteomes" id="UP000001582">
    <property type="component" value="Chromosome"/>
</dbReference>
<dbReference type="GO" id="GO:0030288">
    <property type="term" value="C:outer membrane-bounded periplasmic space"/>
    <property type="evidence" value="ECO:0007669"/>
    <property type="project" value="TreeGrafter"/>
</dbReference>
<dbReference type="GO" id="GO:0030246">
    <property type="term" value="F:carbohydrate binding"/>
    <property type="evidence" value="ECO:0007669"/>
    <property type="project" value="InterPro"/>
</dbReference>
<dbReference type="GO" id="GO:0003824">
    <property type="term" value="F:catalytic activity"/>
    <property type="evidence" value="ECO:0007669"/>
    <property type="project" value="InterPro"/>
</dbReference>
<dbReference type="GO" id="GO:0051274">
    <property type="term" value="P:beta-glucan biosynthetic process"/>
    <property type="evidence" value="ECO:0007669"/>
    <property type="project" value="TreeGrafter"/>
</dbReference>
<dbReference type="FunFam" id="2.70.98.10:FF:000001">
    <property type="entry name" value="Glucans biosynthesis protein G"/>
    <property type="match status" value="1"/>
</dbReference>
<dbReference type="Gene3D" id="2.70.98.10">
    <property type="match status" value="1"/>
</dbReference>
<dbReference type="Gene3D" id="2.60.40.10">
    <property type="entry name" value="Immunoglobulins"/>
    <property type="match status" value="1"/>
</dbReference>
<dbReference type="HAMAP" id="MF_01069">
    <property type="entry name" value="MdoG_OpgG"/>
    <property type="match status" value="1"/>
</dbReference>
<dbReference type="InterPro" id="IPR011013">
    <property type="entry name" value="Gal_mutarotase_sf_dom"/>
</dbReference>
<dbReference type="InterPro" id="IPR014718">
    <property type="entry name" value="GH-type_carb-bd"/>
</dbReference>
<dbReference type="InterPro" id="IPR014438">
    <property type="entry name" value="Glucan_biosyn_MdoG/MdoD"/>
</dbReference>
<dbReference type="InterPro" id="IPR007444">
    <property type="entry name" value="Glucan_biosyn_MdoG_C"/>
</dbReference>
<dbReference type="InterPro" id="IPR013783">
    <property type="entry name" value="Ig-like_fold"/>
</dbReference>
<dbReference type="InterPro" id="IPR014756">
    <property type="entry name" value="Ig_E-set"/>
</dbReference>
<dbReference type="InterPro" id="IPR023704">
    <property type="entry name" value="MdoG_OpgG"/>
</dbReference>
<dbReference type="PANTHER" id="PTHR30504">
    <property type="entry name" value="GLUCANS BIOSYNTHESIS PROTEIN"/>
    <property type="match status" value="1"/>
</dbReference>
<dbReference type="PANTHER" id="PTHR30504:SF4">
    <property type="entry name" value="GLUCANS BIOSYNTHESIS PROTEIN G"/>
    <property type="match status" value="1"/>
</dbReference>
<dbReference type="Pfam" id="PF04349">
    <property type="entry name" value="MdoG"/>
    <property type="match status" value="1"/>
</dbReference>
<dbReference type="PIRSF" id="PIRSF006281">
    <property type="entry name" value="MdoG"/>
    <property type="match status" value="1"/>
</dbReference>
<dbReference type="SUPFAM" id="SSF81296">
    <property type="entry name" value="E set domains"/>
    <property type="match status" value="1"/>
</dbReference>
<dbReference type="SUPFAM" id="SSF74650">
    <property type="entry name" value="Galactose mutarotase-like"/>
    <property type="match status" value="1"/>
</dbReference>
<protein>
    <recommendedName>
        <fullName evidence="1">Glucans biosynthesis protein G</fullName>
    </recommendedName>
</protein>
<organism>
    <name type="scientific">Pseudomonas paraeruginosa (strain DSM 24068 / PA7)</name>
    <name type="common">Pseudomonas aeruginosa (strain PA7)</name>
    <dbReference type="NCBI Taxonomy" id="381754"/>
    <lineage>
        <taxon>Bacteria</taxon>
        <taxon>Pseudomonadati</taxon>
        <taxon>Pseudomonadota</taxon>
        <taxon>Gammaproteobacteria</taxon>
        <taxon>Pseudomonadales</taxon>
        <taxon>Pseudomonadaceae</taxon>
        <taxon>Pseudomonas</taxon>
        <taxon>Pseudomonas paraeruginosa</taxon>
    </lineage>
</organism>
<name>OPGG_PSEP7</name>